<gene>
    <name type="ordered locus">M28_Spy0638</name>
</gene>
<organism>
    <name type="scientific">Streptococcus pyogenes serotype M28 (strain MGAS6180)</name>
    <dbReference type="NCBI Taxonomy" id="319701"/>
    <lineage>
        <taxon>Bacteria</taxon>
        <taxon>Bacillati</taxon>
        <taxon>Bacillota</taxon>
        <taxon>Bacilli</taxon>
        <taxon>Lactobacillales</taxon>
        <taxon>Streptococcaceae</taxon>
        <taxon>Streptococcus</taxon>
    </lineage>
</organism>
<evidence type="ECO:0000255" key="1">
    <source>
        <dbReference type="HAMAP-Rule" id="MF_01685"/>
    </source>
</evidence>
<proteinExistence type="inferred from homology"/>
<protein>
    <recommendedName>
        <fullName evidence="1">Ferredoxin--NADP reductase</fullName>
        <shortName evidence="1">FNR</shortName>
        <shortName evidence="1">Fd-NADP(+) reductase</shortName>
        <ecNumber evidence="1">1.18.1.2</ecNumber>
    </recommendedName>
</protein>
<comment type="catalytic activity">
    <reaction evidence="1">
        <text>2 reduced [2Fe-2S]-[ferredoxin] + NADP(+) + H(+) = 2 oxidized [2Fe-2S]-[ferredoxin] + NADPH</text>
        <dbReference type="Rhea" id="RHEA:20125"/>
        <dbReference type="Rhea" id="RHEA-COMP:10000"/>
        <dbReference type="Rhea" id="RHEA-COMP:10001"/>
        <dbReference type="ChEBI" id="CHEBI:15378"/>
        <dbReference type="ChEBI" id="CHEBI:33737"/>
        <dbReference type="ChEBI" id="CHEBI:33738"/>
        <dbReference type="ChEBI" id="CHEBI:57783"/>
        <dbReference type="ChEBI" id="CHEBI:58349"/>
        <dbReference type="EC" id="1.18.1.2"/>
    </reaction>
</comment>
<comment type="cofactor">
    <cofactor evidence="1">
        <name>FAD</name>
        <dbReference type="ChEBI" id="CHEBI:57692"/>
    </cofactor>
    <text evidence="1">Binds 1 FAD per subunit.</text>
</comment>
<comment type="subunit">
    <text evidence="1">Homodimer.</text>
</comment>
<comment type="similarity">
    <text evidence="1">Belongs to the ferredoxin--NADP reductase type 2 family.</text>
</comment>
<feature type="chain" id="PRO_0000364967" description="Ferredoxin--NADP reductase">
    <location>
        <begin position="1"/>
        <end position="330"/>
    </location>
</feature>
<feature type="binding site" evidence="1">
    <location>
        <position position="35"/>
    </location>
    <ligand>
        <name>FAD</name>
        <dbReference type="ChEBI" id="CHEBI:57692"/>
    </ligand>
</feature>
<feature type="binding site" evidence="1">
    <location>
        <position position="43"/>
    </location>
    <ligand>
        <name>FAD</name>
        <dbReference type="ChEBI" id="CHEBI:57692"/>
    </ligand>
</feature>
<feature type="binding site" evidence="1">
    <location>
        <position position="48"/>
    </location>
    <ligand>
        <name>FAD</name>
        <dbReference type="ChEBI" id="CHEBI:57692"/>
    </ligand>
</feature>
<feature type="binding site" evidence="1">
    <location>
        <position position="90"/>
    </location>
    <ligand>
        <name>FAD</name>
        <dbReference type="ChEBI" id="CHEBI:57692"/>
    </ligand>
</feature>
<feature type="binding site" evidence="1">
    <location>
        <position position="123"/>
    </location>
    <ligand>
        <name>FAD</name>
        <dbReference type="ChEBI" id="CHEBI:57692"/>
    </ligand>
</feature>
<feature type="binding site" evidence="1">
    <location>
        <position position="285"/>
    </location>
    <ligand>
        <name>FAD</name>
        <dbReference type="ChEBI" id="CHEBI:57692"/>
    </ligand>
</feature>
<feature type="binding site" evidence="1">
    <location>
        <position position="326"/>
    </location>
    <ligand>
        <name>FAD</name>
        <dbReference type="ChEBI" id="CHEBI:57692"/>
    </ligand>
</feature>
<dbReference type="EC" id="1.18.1.2" evidence="1"/>
<dbReference type="EMBL" id="CP000056">
    <property type="protein sequence ID" value="AAX71752.1"/>
    <property type="molecule type" value="Genomic_DNA"/>
</dbReference>
<dbReference type="RefSeq" id="WP_011284688.1">
    <property type="nucleotide sequence ID" value="NC_007296.2"/>
</dbReference>
<dbReference type="SMR" id="Q48U54"/>
<dbReference type="KEGG" id="spb:M28_Spy0638"/>
<dbReference type="HOGENOM" id="CLU_031864_5_5_9"/>
<dbReference type="GO" id="GO:0004324">
    <property type="term" value="F:ferredoxin-NADP+ reductase activity"/>
    <property type="evidence" value="ECO:0007669"/>
    <property type="project" value="UniProtKB-UniRule"/>
</dbReference>
<dbReference type="GO" id="GO:0050660">
    <property type="term" value="F:flavin adenine dinucleotide binding"/>
    <property type="evidence" value="ECO:0007669"/>
    <property type="project" value="UniProtKB-UniRule"/>
</dbReference>
<dbReference type="GO" id="GO:0050661">
    <property type="term" value="F:NADP binding"/>
    <property type="evidence" value="ECO:0007669"/>
    <property type="project" value="UniProtKB-UniRule"/>
</dbReference>
<dbReference type="Gene3D" id="3.50.50.60">
    <property type="entry name" value="FAD/NAD(P)-binding domain"/>
    <property type="match status" value="2"/>
</dbReference>
<dbReference type="HAMAP" id="MF_01685">
    <property type="entry name" value="FENR2"/>
    <property type="match status" value="1"/>
</dbReference>
<dbReference type="InterPro" id="IPR036188">
    <property type="entry name" value="FAD/NAD-bd_sf"/>
</dbReference>
<dbReference type="InterPro" id="IPR023753">
    <property type="entry name" value="FAD/NAD-binding_dom"/>
</dbReference>
<dbReference type="InterPro" id="IPR022890">
    <property type="entry name" value="Fd--NADP_Rdtase_type_2"/>
</dbReference>
<dbReference type="InterPro" id="IPR050097">
    <property type="entry name" value="Ferredoxin-NADP_redctase_2"/>
</dbReference>
<dbReference type="PANTHER" id="PTHR48105">
    <property type="entry name" value="THIOREDOXIN REDUCTASE 1-RELATED-RELATED"/>
    <property type="match status" value="1"/>
</dbReference>
<dbReference type="Pfam" id="PF07992">
    <property type="entry name" value="Pyr_redox_2"/>
    <property type="match status" value="1"/>
</dbReference>
<dbReference type="PRINTS" id="PR00368">
    <property type="entry name" value="FADPNR"/>
</dbReference>
<dbReference type="PRINTS" id="PR00469">
    <property type="entry name" value="PNDRDTASEII"/>
</dbReference>
<dbReference type="SUPFAM" id="SSF51905">
    <property type="entry name" value="FAD/NAD(P)-binding domain"/>
    <property type="match status" value="1"/>
</dbReference>
<reference key="1">
    <citation type="journal article" date="2005" name="J. Infect. Dis.">
        <title>Genome sequence of a serotype M28 strain of group A Streptococcus: potential new insights into puerperal sepsis and bacterial disease specificity.</title>
        <authorList>
            <person name="Green N.M."/>
            <person name="Zhang S."/>
            <person name="Porcella S.F."/>
            <person name="Nagiec M.J."/>
            <person name="Barbian K.D."/>
            <person name="Beres S.B."/>
            <person name="Lefebvre R.B."/>
            <person name="Musser J.M."/>
        </authorList>
    </citation>
    <scope>NUCLEOTIDE SEQUENCE [LARGE SCALE GENOMIC DNA]</scope>
    <source>
        <strain>MGAS6180</strain>
    </source>
</reference>
<name>FENR_STRPM</name>
<keyword id="KW-0274">FAD</keyword>
<keyword id="KW-0285">Flavoprotein</keyword>
<keyword id="KW-0521">NADP</keyword>
<keyword id="KW-0560">Oxidoreductase</keyword>
<accession>Q48U54</accession>
<sequence length="330" mass="36160">MKDKAYDITIIGGGPIGLFAAFYAGLRGVTVKIIESLSELGGQPAILYPEKMIYDIPAYPSLTGVELTENLIKQLNRFEDRITICLKEEVLTFDKVKGGFSIRTNKAEHFSKAIIIACGNGAFAPRTLGLESEENFADHNLFYNVHQLDQFAGQKVVICGGGDSAVDWALALEDIAESVTVVHRRDAFRAHEHSVELLTTSTVNLLTPYVPKALKGIGNLAEKLVIQKVKEDEVLELELDSLIVSFGFSTSNKNLKNWNLDYKRSSITVSPLFQTSQEGIFAIGDAAAYNGKVDLIATGFGEAPTAVNQAINYIYPDRDNRVVHSTSLID</sequence>